<keyword id="KW-0430">Lectin</keyword>
<keyword id="KW-1185">Reference proteome</keyword>
<gene>
    <name type="ordered locus">FPV001</name>
</gene>
<gene>
    <name type="ordered locus">FPV260</name>
</gene>
<feature type="chain" id="PRO_0000046724" description="Putative C-type lectin protein FPV001/FPV260">
    <location>
        <begin position="1"/>
        <end position="205"/>
    </location>
</feature>
<feature type="domain" description="C-type lectin">
    <location>
        <begin position="84"/>
        <end position="187"/>
    </location>
</feature>
<dbReference type="EMBL" id="AF198100">
    <property type="protein sequence ID" value="AAF44596.1"/>
    <property type="molecule type" value="Genomic_DNA"/>
</dbReference>
<dbReference type="EMBL" id="AF198100">
    <property type="protein sequence ID" value="AAF44603.1"/>
    <property type="molecule type" value="Genomic_DNA"/>
</dbReference>
<dbReference type="RefSeq" id="NP_038964.1">
    <property type="nucleotide sequence ID" value="NC_002188.1"/>
</dbReference>
<dbReference type="RefSeq" id="NP_039223.1">
    <property type="nucleotide sequence ID" value="NC_002188.1"/>
</dbReference>
<dbReference type="SMR" id="Q9ICH6"/>
<dbReference type="GeneID" id="1486824"/>
<dbReference type="GeneID" id="1486831"/>
<dbReference type="KEGG" id="vg:1486824"/>
<dbReference type="KEGG" id="vg:1486831"/>
<dbReference type="Proteomes" id="UP000008597">
    <property type="component" value="Segment"/>
</dbReference>
<dbReference type="GO" id="GO:0030246">
    <property type="term" value="F:carbohydrate binding"/>
    <property type="evidence" value="ECO:0007669"/>
    <property type="project" value="UniProtKB-KW"/>
</dbReference>
<dbReference type="Gene3D" id="3.10.100.10">
    <property type="entry name" value="Mannose-Binding Protein A, subunit A"/>
    <property type="match status" value="1"/>
</dbReference>
<dbReference type="InterPro" id="IPR016186">
    <property type="entry name" value="C-type_lectin-like/link_sf"/>
</dbReference>
<dbReference type="InterPro" id="IPR016187">
    <property type="entry name" value="CTDL_fold"/>
</dbReference>
<dbReference type="SUPFAM" id="SSF56436">
    <property type="entry name" value="C-type lectin-like"/>
    <property type="match status" value="1"/>
</dbReference>
<organism>
    <name type="scientific">Fowlpox virus (strain NVSL)</name>
    <name type="common">FPV</name>
    <dbReference type="NCBI Taxonomy" id="928301"/>
    <lineage>
        <taxon>Viruses</taxon>
        <taxon>Varidnaviria</taxon>
        <taxon>Bamfordvirae</taxon>
        <taxon>Nucleocytoviricota</taxon>
        <taxon>Pokkesviricetes</taxon>
        <taxon>Chitovirales</taxon>
        <taxon>Poxviridae</taxon>
        <taxon>Chordopoxvirinae</taxon>
        <taxon>Avipoxvirus</taxon>
        <taxon>Fowlpox virus</taxon>
    </lineage>
</organism>
<sequence length="205" mass="23349">MKMNYPIEYYKEKMKFLRDNSERYILPITCLCLTSVVITSCLFAALFVAVRDCKRDSFLEDTTTAITTSSSIATTYRDNLVIHCPRDWISHNGICLLSTGEKVGFRQGIQKCEKLGSDMIGKSEEEMKALKNIWTGNDHSRFWVDNRAAASTFDPVNECAYGTRSSVSEVPKVLTSPCSVRRYLVCKKTDNSYPTTQSSFYNQYE</sequence>
<name>V001_FOWPN</name>
<organismHost>
    <name type="scientific">Vertebrata</name>
    <dbReference type="NCBI Taxonomy" id="7742"/>
</organismHost>
<proteinExistence type="predicted"/>
<protein>
    <recommendedName>
        <fullName>Putative C-type lectin protein FPV001/FPV260</fullName>
    </recommendedName>
</protein>
<accession>Q9ICH6</accession>
<reference key="1">
    <citation type="journal article" date="2000" name="J. Virol.">
        <title>The genome of fowlpox virus.</title>
        <authorList>
            <person name="Afonso C.L."/>
            <person name="Tulman E.R."/>
            <person name="Lu Z."/>
            <person name="Zsak L."/>
            <person name="Kutish G.F."/>
            <person name="Rock D.L."/>
        </authorList>
    </citation>
    <scope>NUCLEOTIDE SEQUENCE [LARGE SCALE GENOMIC DNA]</scope>
</reference>